<keyword id="KW-0227">DNA damage</keyword>
<keyword id="KW-0234">DNA repair</keyword>
<evidence type="ECO:0000255" key="1">
    <source>
        <dbReference type="HAMAP-Rule" id="MF_00149"/>
    </source>
</evidence>
<evidence type="ECO:0000256" key="2">
    <source>
        <dbReference type="SAM" id="MobiDB-lite"/>
    </source>
</evidence>
<organism>
    <name type="scientific">Aeromonas salmonicida (strain A449)</name>
    <dbReference type="NCBI Taxonomy" id="382245"/>
    <lineage>
        <taxon>Bacteria</taxon>
        <taxon>Pseudomonadati</taxon>
        <taxon>Pseudomonadota</taxon>
        <taxon>Gammaproteobacteria</taxon>
        <taxon>Aeromonadales</taxon>
        <taxon>Aeromonadaceae</taxon>
        <taxon>Aeromonas</taxon>
    </lineage>
</organism>
<gene>
    <name evidence="1" type="primary">mutL</name>
    <name type="ordered locus">ASA_3371</name>
</gene>
<sequence>MPIRILPPILANQIAAGEVVERPSSVVKELVENSLDAGADRVEIDIDKGGAKLIRIRDNGCGVAKDELVLALSRHATSKVATLDDLEGICSLGFRGEALASISSVSRLTFTSRTQDQSEAWQAQAEGREMNVTVKPAAHPVGTTVEVVDLFFNTPARRKFMRSEKTEFAHIDELVRRIALSRFDVTLILRHNGKVMRQYKAANTVAEQERRLAAVCGTPFMHHALAVESEHSDVRLWGWLALPEGARPQNDLQYTYVNGRMMRDKLINHAIRQAYDELLPTDRFAAYVLYIELDPHQVDVNVHPAKHEVRFHQARLIHDFIFQALFTALRREGVSAAHQEEPLAETLVELPVSGQIEYPGQAPRPEWYGAEHSYRAPASTNEVREGSAARAGNYQPPEPPSREAMRSMGALLTTLPGAGPASAASATAAMVPSAAAQTAPGVWQALTLVEQAYLLLVRDGQLALLSLVRAERLLLRNWLLEAWGQGLAAQPLLLPVSFKLPKNLIALVEAQERLLKRMGLELKSGGRDTMILTRVPALLRQTDLVRLLPELLQIIESGSDSDASQLAEVLCQWLVEQGISHEKIYDFSTANRLLTELVADFSDQLADIRMVRPVSLTTVLEAFAHDG</sequence>
<name>MUTL_AERS4</name>
<protein>
    <recommendedName>
        <fullName evidence="1">DNA mismatch repair protein MutL</fullName>
    </recommendedName>
</protein>
<feature type="chain" id="PRO_1000009973" description="DNA mismatch repair protein MutL">
    <location>
        <begin position="1"/>
        <end position="627"/>
    </location>
</feature>
<feature type="region of interest" description="Disordered" evidence="2">
    <location>
        <begin position="376"/>
        <end position="404"/>
    </location>
</feature>
<proteinExistence type="inferred from homology"/>
<accession>A4SR27</accession>
<comment type="function">
    <text evidence="1">This protein is involved in the repair of mismatches in DNA. It is required for dam-dependent methyl-directed DNA mismatch repair. May act as a 'molecular matchmaker', a protein that promotes the formation of a stable complex between two or more DNA-binding proteins in an ATP-dependent manner without itself being part of a final effector complex.</text>
</comment>
<comment type="similarity">
    <text evidence="1">Belongs to the DNA mismatch repair MutL/HexB family.</text>
</comment>
<reference key="1">
    <citation type="journal article" date="2008" name="BMC Genomics">
        <title>The genome of Aeromonas salmonicida subsp. salmonicida A449: insights into the evolution of a fish pathogen.</title>
        <authorList>
            <person name="Reith M.E."/>
            <person name="Singh R.K."/>
            <person name="Curtis B."/>
            <person name="Boyd J.M."/>
            <person name="Bouevitch A."/>
            <person name="Kimball J."/>
            <person name="Munholland J."/>
            <person name="Murphy C."/>
            <person name="Sarty D."/>
            <person name="Williams J."/>
            <person name="Nash J.H."/>
            <person name="Johnson S.C."/>
            <person name="Brown L.L."/>
        </authorList>
    </citation>
    <scope>NUCLEOTIDE SEQUENCE [LARGE SCALE GENOMIC DNA]</scope>
    <source>
        <strain>A449</strain>
    </source>
</reference>
<dbReference type="EMBL" id="CP000644">
    <property type="protein sequence ID" value="ABO91349.1"/>
    <property type="molecule type" value="Genomic_DNA"/>
</dbReference>
<dbReference type="RefSeq" id="WP_005311659.1">
    <property type="nucleotide sequence ID" value="NC_009348.1"/>
</dbReference>
<dbReference type="SMR" id="A4SR27"/>
<dbReference type="STRING" id="29491.GCA_000820065_03762"/>
<dbReference type="KEGG" id="asa:ASA_3371"/>
<dbReference type="eggNOG" id="COG0323">
    <property type="taxonomic scope" value="Bacteria"/>
</dbReference>
<dbReference type="HOGENOM" id="CLU_004131_5_1_6"/>
<dbReference type="Proteomes" id="UP000000225">
    <property type="component" value="Chromosome"/>
</dbReference>
<dbReference type="GO" id="GO:0032300">
    <property type="term" value="C:mismatch repair complex"/>
    <property type="evidence" value="ECO:0007669"/>
    <property type="project" value="InterPro"/>
</dbReference>
<dbReference type="GO" id="GO:0005524">
    <property type="term" value="F:ATP binding"/>
    <property type="evidence" value="ECO:0007669"/>
    <property type="project" value="InterPro"/>
</dbReference>
<dbReference type="GO" id="GO:0016887">
    <property type="term" value="F:ATP hydrolysis activity"/>
    <property type="evidence" value="ECO:0007669"/>
    <property type="project" value="InterPro"/>
</dbReference>
<dbReference type="GO" id="GO:0140664">
    <property type="term" value="F:ATP-dependent DNA damage sensor activity"/>
    <property type="evidence" value="ECO:0007669"/>
    <property type="project" value="InterPro"/>
</dbReference>
<dbReference type="GO" id="GO:0030983">
    <property type="term" value="F:mismatched DNA binding"/>
    <property type="evidence" value="ECO:0007669"/>
    <property type="project" value="InterPro"/>
</dbReference>
<dbReference type="GO" id="GO:0006298">
    <property type="term" value="P:mismatch repair"/>
    <property type="evidence" value="ECO:0007669"/>
    <property type="project" value="UniProtKB-UniRule"/>
</dbReference>
<dbReference type="CDD" id="cd16926">
    <property type="entry name" value="HATPase_MutL-MLH-PMS-like"/>
    <property type="match status" value="1"/>
</dbReference>
<dbReference type="CDD" id="cd03482">
    <property type="entry name" value="MutL_Trans_MutL"/>
    <property type="match status" value="1"/>
</dbReference>
<dbReference type="FunFam" id="3.30.230.10:FF:000013">
    <property type="entry name" value="DNA mismatch repair endonuclease MutL"/>
    <property type="match status" value="1"/>
</dbReference>
<dbReference type="FunFam" id="3.30.565.10:FF:000003">
    <property type="entry name" value="DNA mismatch repair endonuclease MutL"/>
    <property type="match status" value="1"/>
</dbReference>
<dbReference type="Gene3D" id="3.30.230.10">
    <property type="match status" value="1"/>
</dbReference>
<dbReference type="Gene3D" id="3.30.565.10">
    <property type="entry name" value="Histidine kinase-like ATPase, C-terminal domain"/>
    <property type="match status" value="1"/>
</dbReference>
<dbReference type="Gene3D" id="3.30.1540.20">
    <property type="entry name" value="MutL, C-terminal domain, dimerisation subdomain"/>
    <property type="match status" value="1"/>
</dbReference>
<dbReference type="Gene3D" id="3.30.1370.100">
    <property type="entry name" value="MutL, C-terminal domain, regulatory subdomain"/>
    <property type="match status" value="1"/>
</dbReference>
<dbReference type="HAMAP" id="MF_00149">
    <property type="entry name" value="DNA_mis_repair"/>
    <property type="match status" value="1"/>
</dbReference>
<dbReference type="InterPro" id="IPR014762">
    <property type="entry name" value="DNA_mismatch_repair_CS"/>
</dbReference>
<dbReference type="InterPro" id="IPR020667">
    <property type="entry name" value="DNA_mismatch_repair_MutL"/>
</dbReference>
<dbReference type="InterPro" id="IPR013507">
    <property type="entry name" value="DNA_mismatch_S5_2-like"/>
</dbReference>
<dbReference type="InterPro" id="IPR036890">
    <property type="entry name" value="HATPase_C_sf"/>
</dbReference>
<dbReference type="InterPro" id="IPR002099">
    <property type="entry name" value="MutL/Mlh/PMS"/>
</dbReference>
<dbReference type="InterPro" id="IPR038973">
    <property type="entry name" value="MutL/Mlh/Pms-like"/>
</dbReference>
<dbReference type="InterPro" id="IPR014790">
    <property type="entry name" value="MutL_C"/>
</dbReference>
<dbReference type="InterPro" id="IPR042120">
    <property type="entry name" value="MutL_C_dimsub"/>
</dbReference>
<dbReference type="InterPro" id="IPR042121">
    <property type="entry name" value="MutL_C_regsub"/>
</dbReference>
<dbReference type="InterPro" id="IPR037198">
    <property type="entry name" value="MutL_C_sf"/>
</dbReference>
<dbReference type="InterPro" id="IPR020568">
    <property type="entry name" value="Ribosomal_Su5_D2-typ_SF"/>
</dbReference>
<dbReference type="InterPro" id="IPR014721">
    <property type="entry name" value="Ribsml_uS5_D2-typ_fold_subgr"/>
</dbReference>
<dbReference type="NCBIfam" id="TIGR00585">
    <property type="entry name" value="mutl"/>
    <property type="match status" value="1"/>
</dbReference>
<dbReference type="NCBIfam" id="NF000948">
    <property type="entry name" value="PRK00095.1-1"/>
    <property type="match status" value="1"/>
</dbReference>
<dbReference type="PANTHER" id="PTHR10073">
    <property type="entry name" value="DNA MISMATCH REPAIR PROTEIN MLH, PMS, MUTL"/>
    <property type="match status" value="1"/>
</dbReference>
<dbReference type="PANTHER" id="PTHR10073:SF12">
    <property type="entry name" value="DNA MISMATCH REPAIR PROTEIN MLH1"/>
    <property type="match status" value="1"/>
</dbReference>
<dbReference type="Pfam" id="PF01119">
    <property type="entry name" value="DNA_mis_repair"/>
    <property type="match status" value="1"/>
</dbReference>
<dbReference type="Pfam" id="PF13589">
    <property type="entry name" value="HATPase_c_3"/>
    <property type="match status" value="1"/>
</dbReference>
<dbReference type="Pfam" id="PF08676">
    <property type="entry name" value="MutL_C"/>
    <property type="match status" value="1"/>
</dbReference>
<dbReference type="SMART" id="SM01340">
    <property type="entry name" value="DNA_mis_repair"/>
    <property type="match status" value="1"/>
</dbReference>
<dbReference type="SMART" id="SM00853">
    <property type="entry name" value="MutL_C"/>
    <property type="match status" value="1"/>
</dbReference>
<dbReference type="SUPFAM" id="SSF55874">
    <property type="entry name" value="ATPase domain of HSP90 chaperone/DNA topoisomerase II/histidine kinase"/>
    <property type="match status" value="1"/>
</dbReference>
<dbReference type="SUPFAM" id="SSF118116">
    <property type="entry name" value="DNA mismatch repair protein MutL"/>
    <property type="match status" value="1"/>
</dbReference>
<dbReference type="SUPFAM" id="SSF54211">
    <property type="entry name" value="Ribosomal protein S5 domain 2-like"/>
    <property type="match status" value="1"/>
</dbReference>
<dbReference type="PROSITE" id="PS00058">
    <property type="entry name" value="DNA_MISMATCH_REPAIR_1"/>
    <property type="match status" value="1"/>
</dbReference>